<proteinExistence type="inferred from homology"/>
<protein>
    <recommendedName>
        <fullName evidence="1">NADH-quinone oxidoreductase subunit I</fullName>
        <ecNumber evidence="1">7.1.1.-</ecNumber>
    </recommendedName>
    <alternativeName>
        <fullName evidence="1">NADH dehydrogenase I subunit I</fullName>
    </alternativeName>
    <alternativeName>
        <fullName evidence="1">NDH-1 subunit I</fullName>
    </alternativeName>
</protein>
<gene>
    <name evidence="1" type="primary">nuoI1</name>
    <name type="ordered locus">Ppro_0636</name>
</gene>
<gene>
    <name evidence="1" type="primary">nuoI2</name>
    <name type="ordered locus">Ppro_1631</name>
</gene>
<gene>
    <name evidence="1" type="primary">nuoI3</name>
    <name type="ordered locus">Ppro_3185</name>
</gene>
<keyword id="KW-0004">4Fe-4S</keyword>
<keyword id="KW-0997">Cell inner membrane</keyword>
<keyword id="KW-1003">Cell membrane</keyword>
<keyword id="KW-0408">Iron</keyword>
<keyword id="KW-0411">Iron-sulfur</keyword>
<keyword id="KW-0472">Membrane</keyword>
<keyword id="KW-0479">Metal-binding</keyword>
<keyword id="KW-0520">NAD</keyword>
<keyword id="KW-0874">Quinone</keyword>
<keyword id="KW-1185">Reference proteome</keyword>
<keyword id="KW-0677">Repeat</keyword>
<keyword id="KW-1278">Translocase</keyword>
<keyword id="KW-0830">Ubiquinone</keyword>
<name>NUOI_PELPD</name>
<organism>
    <name type="scientific">Pelobacter propionicus (strain DSM 2379 / NBRC 103807 / OttBd1)</name>
    <dbReference type="NCBI Taxonomy" id="338966"/>
    <lineage>
        <taxon>Bacteria</taxon>
        <taxon>Pseudomonadati</taxon>
        <taxon>Thermodesulfobacteriota</taxon>
        <taxon>Desulfuromonadia</taxon>
        <taxon>Desulfuromonadales</taxon>
        <taxon>Desulfuromonadaceae</taxon>
        <taxon>Pelobacter</taxon>
    </lineage>
</organism>
<evidence type="ECO:0000255" key="1">
    <source>
        <dbReference type="HAMAP-Rule" id="MF_01351"/>
    </source>
</evidence>
<dbReference type="EC" id="7.1.1.-" evidence="1"/>
<dbReference type="EMBL" id="CP000482">
    <property type="protein sequence ID" value="ABK98267.1"/>
    <property type="molecule type" value="Genomic_DNA"/>
</dbReference>
<dbReference type="EMBL" id="CP000482">
    <property type="protein sequence ID" value="ABK99246.1"/>
    <property type="molecule type" value="Genomic_DNA"/>
</dbReference>
<dbReference type="EMBL" id="CP000482">
    <property type="protein sequence ID" value="ABL00779.1"/>
    <property type="molecule type" value="Genomic_DNA"/>
</dbReference>
<dbReference type="RefSeq" id="WP_011734580.1">
    <property type="nucleotide sequence ID" value="NC_008609.1"/>
</dbReference>
<dbReference type="SMR" id="A1ALP7"/>
<dbReference type="STRING" id="338966.Ppro_0636"/>
<dbReference type="KEGG" id="ppd:Ppro_0636"/>
<dbReference type="KEGG" id="ppd:Ppro_1631"/>
<dbReference type="KEGG" id="ppd:Ppro_3185"/>
<dbReference type="eggNOG" id="COG1143">
    <property type="taxonomic scope" value="Bacteria"/>
</dbReference>
<dbReference type="HOGENOM" id="CLU_067218_4_3_7"/>
<dbReference type="OrthoDB" id="9808559at2"/>
<dbReference type="Proteomes" id="UP000006732">
    <property type="component" value="Chromosome"/>
</dbReference>
<dbReference type="GO" id="GO:0005886">
    <property type="term" value="C:plasma membrane"/>
    <property type="evidence" value="ECO:0007669"/>
    <property type="project" value="UniProtKB-SubCell"/>
</dbReference>
<dbReference type="GO" id="GO:0051539">
    <property type="term" value="F:4 iron, 4 sulfur cluster binding"/>
    <property type="evidence" value="ECO:0007669"/>
    <property type="project" value="UniProtKB-KW"/>
</dbReference>
<dbReference type="GO" id="GO:0005506">
    <property type="term" value="F:iron ion binding"/>
    <property type="evidence" value="ECO:0007669"/>
    <property type="project" value="UniProtKB-UniRule"/>
</dbReference>
<dbReference type="GO" id="GO:0050136">
    <property type="term" value="F:NADH:ubiquinone reductase (non-electrogenic) activity"/>
    <property type="evidence" value="ECO:0007669"/>
    <property type="project" value="UniProtKB-UniRule"/>
</dbReference>
<dbReference type="GO" id="GO:0048038">
    <property type="term" value="F:quinone binding"/>
    <property type="evidence" value="ECO:0007669"/>
    <property type="project" value="UniProtKB-KW"/>
</dbReference>
<dbReference type="Gene3D" id="3.30.70.3270">
    <property type="match status" value="1"/>
</dbReference>
<dbReference type="HAMAP" id="MF_01351">
    <property type="entry name" value="NDH1_NuoI"/>
    <property type="match status" value="1"/>
</dbReference>
<dbReference type="InterPro" id="IPR017896">
    <property type="entry name" value="4Fe4S_Fe-S-bd"/>
</dbReference>
<dbReference type="InterPro" id="IPR017900">
    <property type="entry name" value="4Fe4S_Fe_S_CS"/>
</dbReference>
<dbReference type="InterPro" id="IPR010226">
    <property type="entry name" value="NADH_quinone_OxRdtase_chainI"/>
</dbReference>
<dbReference type="PANTHER" id="PTHR10849">
    <property type="entry name" value="NADH DEHYDROGENASE UBIQUINONE IRON-SULFUR PROTEIN 8, MITOCHONDRIAL"/>
    <property type="match status" value="1"/>
</dbReference>
<dbReference type="PANTHER" id="PTHR10849:SF24">
    <property type="entry name" value="NADH-QUINONE OXIDOREDUCTASE SUBUNIT I 2"/>
    <property type="match status" value="1"/>
</dbReference>
<dbReference type="Pfam" id="PF12838">
    <property type="entry name" value="Fer4_7"/>
    <property type="match status" value="1"/>
</dbReference>
<dbReference type="SUPFAM" id="SSF54862">
    <property type="entry name" value="4Fe-4S ferredoxins"/>
    <property type="match status" value="1"/>
</dbReference>
<dbReference type="PROSITE" id="PS00198">
    <property type="entry name" value="4FE4S_FER_1"/>
    <property type="match status" value="2"/>
</dbReference>
<dbReference type="PROSITE" id="PS51379">
    <property type="entry name" value="4FE4S_FER_2"/>
    <property type="match status" value="2"/>
</dbReference>
<accession>A1ALP7</accession>
<feature type="chain" id="PRO_0000298528" description="NADH-quinone oxidoreductase subunit I">
    <location>
        <begin position="1"/>
        <end position="186"/>
    </location>
</feature>
<feature type="domain" description="4Fe-4S ferredoxin-type 1" evidence="1">
    <location>
        <begin position="70"/>
        <end position="100"/>
    </location>
</feature>
<feature type="domain" description="4Fe-4S ferredoxin-type 2" evidence="1">
    <location>
        <begin position="113"/>
        <end position="142"/>
    </location>
</feature>
<feature type="binding site" evidence="1">
    <location>
        <position position="80"/>
    </location>
    <ligand>
        <name>[4Fe-4S] cluster</name>
        <dbReference type="ChEBI" id="CHEBI:49883"/>
        <label>1</label>
    </ligand>
</feature>
<feature type="binding site" evidence="1">
    <location>
        <position position="83"/>
    </location>
    <ligand>
        <name>[4Fe-4S] cluster</name>
        <dbReference type="ChEBI" id="CHEBI:49883"/>
        <label>1</label>
    </ligand>
</feature>
<feature type="binding site" evidence="1">
    <location>
        <position position="86"/>
    </location>
    <ligand>
        <name>[4Fe-4S] cluster</name>
        <dbReference type="ChEBI" id="CHEBI:49883"/>
        <label>1</label>
    </ligand>
</feature>
<feature type="binding site" evidence="1">
    <location>
        <position position="90"/>
    </location>
    <ligand>
        <name>[4Fe-4S] cluster</name>
        <dbReference type="ChEBI" id="CHEBI:49883"/>
        <label>2</label>
    </ligand>
</feature>
<feature type="binding site" evidence="1">
    <location>
        <position position="122"/>
    </location>
    <ligand>
        <name>[4Fe-4S] cluster</name>
        <dbReference type="ChEBI" id="CHEBI:49883"/>
        <label>2</label>
    </ligand>
</feature>
<feature type="binding site" evidence="1">
    <location>
        <position position="125"/>
    </location>
    <ligand>
        <name>[4Fe-4S] cluster</name>
        <dbReference type="ChEBI" id="CHEBI:49883"/>
        <label>2</label>
    </ligand>
</feature>
<feature type="binding site" evidence="1">
    <location>
        <position position="128"/>
    </location>
    <ligand>
        <name>[4Fe-4S] cluster</name>
        <dbReference type="ChEBI" id="CHEBI:49883"/>
        <label>2</label>
    </ligand>
</feature>
<feature type="binding site" evidence="1">
    <location>
        <position position="132"/>
    </location>
    <ligand>
        <name>[4Fe-4S] cluster</name>
        <dbReference type="ChEBI" id="CHEBI:49883"/>
        <label>1</label>
    </ligand>
</feature>
<reference key="1">
    <citation type="submission" date="2006-10" db="EMBL/GenBank/DDBJ databases">
        <title>Complete sequence of chromosome of Pelobacter propionicus DSM 2379.</title>
        <authorList>
            <consortium name="US DOE Joint Genome Institute"/>
            <person name="Copeland A."/>
            <person name="Lucas S."/>
            <person name="Lapidus A."/>
            <person name="Barry K."/>
            <person name="Detter J.C."/>
            <person name="Glavina del Rio T."/>
            <person name="Hammon N."/>
            <person name="Israni S."/>
            <person name="Dalin E."/>
            <person name="Tice H."/>
            <person name="Pitluck S."/>
            <person name="Saunders E."/>
            <person name="Brettin T."/>
            <person name="Bruce D."/>
            <person name="Han C."/>
            <person name="Tapia R."/>
            <person name="Schmutz J."/>
            <person name="Larimer F."/>
            <person name="Land M."/>
            <person name="Hauser L."/>
            <person name="Kyrpides N."/>
            <person name="Kim E."/>
            <person name="Lovley D."/>
            <person name="Richardson P."/>
        </authorList>
    </citation>
    <scope>NUCLEOTIDE SEQUENCE [LARGE SCALE GENOMIC DNA]</scope>
    <source>
        <strain>DSM 2379 / NBRC 103807 / OttBd1</strain>
    </source>
</reference>
<sequence length="186" mass="21370">MKKEYWNKPTMDLWDRLYIFEVIRGLCITGSVFFGNMWKWLTFRKGALTAYYPEELRADYSSANRGRHLLTTRADGKVQCVSCNMCATVCPAYCIEIQSAADFNDPFHPKSPDRFEIDYSRCIFCGFCVEACPEDAIRMSKDTPNFPGFDRENMWATQDLLMNWQPASDAAKSYPGSGQAHQEVHP</sequence>
<comment type="function">
    <text evidence="1">NDH-1 shuttles electrons from NADH, via FMN and iron-sulfur (Fe-S) centers, to quinones in the respiratory chain. The immediate electron acceptor for the enzyme in this species is believed to be ubiquinone. Couples the redox reaction to proton translocation (for every two electrons transferred, four hydrogen ions are translocated across the cytoplasmic membrane), and thus conserves the redox energy in a proton gradient.</text>
</comment>
<comment type="catalytic activity">
    <reaction evidence="1">
        <text>a quinone + NADH + 5 H(+)(in) = a quinol + NAD(+) + 4 H(+)(out)</text>
        <dbReference type="Rhea" id="RHEA:57888"/>
        <dbReference type="ChEBI" id="CHEBI:15378"/>
        <dbReference type="ChEBI" id="CHEBI:24646"/>
        <dbReference type="ChEBI" id="CHEBI:57540"/>
        <dbReference type="ChEBI" id="CHEBI:57945"/>
        <dbReference type="ChEBI" id="CHEBI:132124"/>
    </reaction>
</comment>
<comment type="cofactor">
    <cofactor evidence="1">
        <name>[4Fe-4S] cluster</name>
        <dbReference type="ChEBI" id="CHEBI:49883"/>
    </cofactor>
    <text evidence="1">Binds 2 [4Fe-4S] clusters per subunit.</text>
</comment>
<comment type="subunit">
    <text evidence="1">NDH-1 is composed of 14 different subunits. Subunits NuoA, H, J, K, L, M, N constitute the membrane sector of the complex.</text>
</comment>
<comment type="subcellular location">
    <subcellularLocation>
        <location evidence="1">Cell inner membrane</location>
        <topology evidence="1">Peripheral membrane protein</topology>
    </subcellularLocation>
</comment>
<comment type="similarity">
    <text evidence="1">Belongs to the complex I 23 kDa subunit family.</text>
</comment>